<sequence length="218" mass="21881">MSETAPVAAPAVSAPGAKAAAKKPKKAAGGAKPRKPAGPSVTELITKAVSASKERKGLSLAALKKALAAGGYDVEKNNSRIKLGLKSLVSKGTLVQTKGTGASGSFKLNKKPGETKAKATKKKPAAKPKKPAAKKPAAAAKKPKKAAAVKKSPKKAKKPAAAATKKAAKSPKKATKAGRPKKTAKSPAKAKAVKPKAAKSKAAKPKAAKAKKAATKKK</sequence>
<keyword id="KW-0007">Acetylation</keyword>
<keyword id="KW-0158">Chromosome</keyword>
<keyword id="KW-0903">Direct protein sequencing</keyword>
<keyword id="KW-0238">DNA-binding</keyword>
<keyword id="KW-0539">Nucleus</keyword>
<keyword id="KW-1185">Reference proteome</keyword>
<evidence type="ECO:0000255" key="1">
    <source>
        <dbReference type="PROSITE-ProRule" id="PRU00837"/>
    </source>
</evidence>
<evidence type="ECO:0000256" key="2">
    <source>
        <dbReference type="SAM" id="MobiDB-lite"/>
    </source>
</evidence>
<evidence type="ECO:0000269" key="3">
    <source ref="2"/>
</evidence>
<comment type="function">
    <text>Histones H1 are necessary for the condensation of nucleosome chains into higher-order structures.</text>
</comment>
<comment type="subcellular location">
    <subcellularLocation>
        <location>Nucleus</location>
    </subcellularLocation>
    <subcellularLocation>
        <location>Chromosome</location>
    </subcellularLocation>
</comment>
<comment type="similarity">
    <text evidence="1">Belongs to the histone H1/H5 family.</text>
</comment>
<accession>P09987</accession>
<proteinExistence type="evidence at protein level"/>
<name>H1_CHICK</name>
<dbReference type="EMBL" id="J00863">
    <property type="status" value="NOT_ANNOTATED_CDS"/>
    <property type="molecule type" value="Genomic_DNA"/>
</dbReference>
<dbReference type="PIR" id="A29179">
    <property type="entry name" value="HSCH1"/>
</dbReference>
<dbReference type="SMR" id="P09987"/>
<dbReference type="FunCoup" id="P09987">
    <property type="interactions" value="12"/>
</dbReference>
<dbReference type="STRING" id="9031.ENSGALP00000019163"/>
<dbReference type="PaxDb" id="9031-ENSGALP00000019163"/>
<dbReference type="VEuPathDB" id="HostDB:geneid_417954"/>
<dbReference type="eggNOG" id="KOG4012">
    <property type="taxonomic scope" value="Eukaryota"/>
</dbReference>
<dbReference type="InParanoid" id="P09987"/>
<dbReference type="Proteomes" id="UP000000539">
    <property type="component" value="Unassembled WGS sequence"/>
</dbReference>
<dbReference type="GO" id="GO:0000786">
    <property type="term" value="C:nucleosome"/>
    <property type="evidence" value="ECO:0007669"/>
    <property type="project" value="InterPro"/>
</dbReference>
<dbReference type="GO" id="GO:0005634">
    <property type="term" value="C:nucleus"/>
    <property type="evidence" value="ECO:0000318"/>
    <property type="project" value="GO_Central"/>
</dbReference>
<dbReference type="GO" id="GO:0003690">
    <property type="term" value="F:double-stranded DNA binding"/>
    <property type="evidence" value="ECO:0000318"/>
    <property type="project" value="GO_Central"/>
</dbReference>
<dbReference type="GO" id="GO:0031492">
    <property type="term" value="F:nucleosomal DNA binding"/>
    <property type="evidence" value="ECO:0000318"/>
    <property type="project" value="GO_Central"/>
</dbReference>
<dbReference type="GO" id="GO:0030527">
    <property type="term" value="F:structural constituent of chromatin"/>
    <property type="evidence" value="ECO:0007669"/>
    <property type="project" value="InterPro"/>
</dbReference>
<dbReference type="GO" id="GO:0030261">
    <property type="term" value="P:chromosome condensation"/>
    <property type="evidence" value="ECO:0000318"/>
    <property type="project" value="GO_Central"/>
</dbReference>
<dbReference type="GO" id="GO:0045910">
    <property type="term" value="P:negative regulation of DNA recombination"/>
    <property type="evidence" value="ECO:0000318"/>
    <property type="project" value="GO_Central"/>
</dbReference>
<dbReference type="GO" id="GO:0006334">
    <property type="term" value="P:nucleosome assembly"/>
    <property type="evidence" value="ECO:0007669"/>
    <property type="project" value="InterPro"/>
</dbReference>
<dbReference type="CDD" id="cd00073">
    <property type="entry name" value="H15"/>
    <property type="match status" value="1"/>
</dbReference>
<dbReference type="FunFam" id="1.10.10.10:FF:000075">
    <property type="entry name" value="Histone H1 like"/>
    <property type="match status" value="1"/>
</dbReference>
<dbReference type="Gene3D" id="1.10.10.10">
    <property type="entry name" value="Winged helix-like DNA-binding domain superfamily/Winged helix DNA-binding domain"/>
    <property type="match status" value="1"/>
</dbReference>
<dbReference type="InterPro" id="IPR005819">
    <property type="entry name" value="H1/H5"/>
</dbReference>
<dbReference type="InterPro" id="IPR005818">
    <property type="entry name" value="Histone_H1/H5_H15"/>
</dbReference>
<dbReference type="InterPro" id="IPR036388">
    <property type="entry name" value="WH-like_DNA-bd_sf"/>
</dbReference>
<dbReference type="InterPro" id="IPR036390">
    <property type="entry name" value="WH_DNA-bd_sf"/>
</dbReference>
<dbReference type="Pfam" id="PF00538">
    <property type="entry name" value="Linker_histone"/>
    <property type="match status" value="1"/>
</dbReference>
<dbReference type="PRINTS" id="PR00624">
    <property type="entry name" value="HISTONEH5"/>
</dbReference>
<dbReference type="SMART" id="SM00526">
    <property type="entry name" value="H15"/>
    <property type="match status" value="1"/>
</dbReference>
<dbReference type="SUPFAM" id="SSF46785">
    <property type="entry name" value="Winged helix' DNA-binding domain"/>
    <property type="match status" value="1"/>
</dbReference>
<dbReference type="PROSITE" id="PS51504">
    <property type="entry name" value="H15"/>
    <property type="match status" value="1"/>
</dbReference>
<feature type="initiator methionine" description="Removed" evidence="3">
    <location>
        <position position="1"/>
    </location>
</feature>
<feature type="chain" id="PRO_0000195927" description="Histone H1">
    <location>
        <begin position="2"/>
        <end position="218"/>
    </location>
</feature>
<feature type="domain" description="H15" evidence="1">
    <location>
        <begin position="37"/>
        <end position="110"/>
    </location>
</feature>
<feature type="region of interest" description="Disordered" evidence="2">
    <location>
        <begin position="1"/>
        <end position="42"/>
    </location>
</feature>
<feature type="region of interest" description="Disordered" evidence="2">
    <location>
        <begin position="89"/>
        <end position="218"/>
    </location>
</feature>
<feature type="compositionally biased region" description="Low complexity" evidence="2">
    <location>
        <begin position="1"/>
        <end position="19"/>
    </location>
</feature>
<feature type="compositionally biased region" description="Basic residues" evidence="2">
    <location>
        <begin position="118"/>
        <end position="133"/>
    </location>
</feature>
<feature type="compositionally biased region" description="Basic residues" evidence="2">
    <location>
        <begin position="141"/>
        <end position="158"/>
    </location>
</feature>
<feature type="compositionally biased region" description="Basic residues" evidence="2">
    <location>
        <begin position="166"/>
        <end position="184"/>
    </location>
</feature>
<feature type="compositionally biased region" description="Basic residues" evidence="2">
    <location>
        <begin position="191"/>
        <end position="218"/>
    </location>
</feature>
<feature type="modified residue" description="N-acetylserine" evidence="3">
    <location>
        <position position="2"/>
    </location>
</feature>
<reference key="1">
    <citation type="journal article" date="1983" name="J. Biol. Chem.">
        <title>Genomic organization, DNA sequence, and expression of chicken embryonic histone genes.</title>
        <authorList>
            <person name="Sugarman B.J."/>
            <person name="Dodgson J.B."/>
            <person name="Engel J.D."/>
        </authorList>
    </citation>
    <scope>NUCLEOTIDE SEQUENCE [GENOMIC DNA]</scope>
</reference>
<reference key="2">
    <citation type="submission" date="2007-01" db="UniProtKB">
        <authorList>
            <person name="Bienvenut W.V."/>
            <person name="Black E.J."/>
            <person name="Gillespie D.A."/>
        </authorList>
    </citation>
    <scope>PROTEIN SEQUENCE OF 2-18; 35-47 AND 66-76</scope>
    <scope>CLEAVAGE OF INITIATOR METHIONINE</scope>
    <scope>ACETYLATION AT SER-2</scope>
    <scope>IDENTIFICATION BY MASS SPECTROMETRY</scope>
    <source>
        <tissue>B-cell lymphoma</tissue>
    </source>
</reference>
<protein>
    <recommendedName>
        <fullName>Histone H1</fullName>
    </recommendedName>
</protein>
<organism>
    <name type="scientific">Gallus gallus</name>
    <name type="common">Chicken</name>
    <dbReference type="NCBI Taxonomy" id="9031"/>
    <lineage>
        <taxon>Eukaryota</taxon>
        <taxon>Metazoa</taxon>
        <taxon>Chordata</taxon>
        <taxon>Craniata</taxon>
        <taxon>Vertebrata</taxon>
        <taxon>Euteleostomi</taxon>
        <taxon>Archelosauria</taxon>
        <taxon>Archosauria</taxon>
        <taxon>Dinosauria</taxon>
        <taxon>Saurischia</taxon>
        <taxon>Theropoda</taxon>
        <taxon>Coelurosauria</taxon>
        <taxon>Aves</taxon>
        <taxon>Neognathae</taxon>
        <taxon>Galloanserae</taxon>
        <taxon>Galliformes</taxon>
        <taxon>Phasianidae</taxon>
        <taxon>Phasianinae</taxon>
        <taxon>Gallus</taxon>
    </lineage>
</organism>